<gene>
    <name evidence="1" type="primary">glgA</name>
    <name type="ordered locus">Cpha266_2377</name>
</gene>
<sequence length="489" mass="55942">MARRNFKVLYVSGEVSPFVRFSALADFMASFPQAVEEEGFEARIMMPKYGTINDRKFRLHDVLRLSDIEVHLKEKTDLLHVKVTALPSSKIQTYFLYNEKYFKRNGLFTDMHSGNDTKVNTEKIIFFNVGVLETLQRLGWKPDIIHCHDWHASLIPLLLRTVYASNEFFKDIKTVLTIHNIYRQGILPFKIFQKLLPEEVCSGLHRQNDEVNMLYTGVEHVDLLTTTSKQYADTIRLDGEETYGLGRILEERKENLHGILNGIDTRQWNPATDKLIKKRYSIERLDGKADNKKALQEEAGLSVDAERPLVGVIAGFDEFQGADLLARSLEKLVALDMQLVICGSGDKVYEKTFRDFAEQYPEQVSLQIEYTDAFMHLAIAGMDILLMPGRIESCGMMQLFAMSYGTIPVVYAGGGIIETIHELQEGIGSGFIFHEYTDDSLVGKLSEALAMYSDEERWPQLVHEAMSKDFAWKSSAEEYDQLYRQLLEP</sequence>
<reference key="1">
    <citation type="submission" date="2006-12" db="EMBL/GenBank/DDBJ databases">
        <title>Complete sequence of Chlorobium phaeobacteroides DSM 266.</title>
        <authorList>
            <consortium name="US DOE Joint Genome Institute"/>
            <person name="Copeland A."/>
            <person name="Lucas S."/>
            <person name="Lapidus A."/>
            <person name="Barry K."/>
            <person name="Detter J.C."/>
            <person name="Glavina del Rio T."/>
            <person name="Hammon N."/>
            <person name="Israni S."/>
            <person name="Pitluck S."/>
            <person name="Goltsman E."/>
            <person name="Schmutz J."/>
            <person name="Larimer F."/>
            <person name="Land M."/>
            <person name="Hauser L."/>
            <person name="Mikhailova N."/>
            <person name="Li T."/>
            <person name="Overmann J."/>
            <person name="Bryant D.A."/>
            <person name="Richardson P."/>
        </authorList>
    </citation>
    <scope>NUCLEOTIDE SEQUENCE [LARGE SCALE GENOMIC DNA]</scope>
    <source>
        <strain>DSM 266 / SMG 266 / 2430</strain>
    </source>
</reference>
<evidence type="ECO:0000255" key="1">
    <source>
        <dbReference type="HAMAP-Rule" id="MF_00484"/>
    </source>
</evidence>
<name>GLGA_CHLPD</name>
<accession>A1BIY8</accession>
<proteinExistence type="inferred from homology"/>
<feature type="chain" id="PRO_1000014345" description="Glycogen synthase">
    <location>
        <begin position="1"/>
        <end position="489"/>
    </location>
</feature>
<feature type="binding site" evidence="1">
    <location>
        <position position="20"/>
    </location>
    <ligand>
        <name>ADP-alpha-D-glucose</name>
        <dbReference type="ChEBI" id="CHEBI:57498"/>
    </ligand>
</feature>
<organism>
    <name type="scientific">Chlorobium phaeobacteroides (strain DSM 266 / SMG 266 / 2430)</name>
    <dbReference type="NCBI Taxonomy" id="290317"/>
    <lineage>
        <taxon>Bacteria</taxon>
        <taxon>Pseudomonadati</taxon>
        <taxon>Chlorobiota</taxon>
        <taxon>Chlorobiia</taxon>
        <taxon>Chlorobiales</taxon>
        <taxon>Chlorobiaceae</taxon>
        <taxon>Chlorobium/Pelodictyon group</taxon>
        <taxon>Chlorobium</taxon>
    </lineage>
</organism>
<comment type="function">
    <text evidence="1">Synthesizes alpha-1,4-glucan chains using ADP-glucose.</text>
</comment>
<comment type="catalytic activity">
    <reaction evidence="1">
        <text>[(1-&gt;4)-alpha-D-glucosyl](n) + ADP-alpha-D-glucose = [(1-&gt;4)-alpha-D-glucosyl](n+1) + ADP + H(+)</text>
        <dbReference type="Rhea" id="RHEA:18189"/>
        <dbReference type="Rhea" id="RHEA-COMP:9584"/>
        <dbReference type="Rhea" id="RHEA-COMP:9587"/>
        <dbReference type="ChEBI" id="CHEBI:15378"/>
        <dbReference type="ChEBI" id="CHEBI:15444"/>
        <dbReference type="ChEBI" id="CHEBI:57498"/>
        <dbReference type="ChEBI" id="CHEBI:456216"/>
        <dbReference type="EC" id="2.4.1.21"/>
    </reaction>
</comment>
<comment type="pathway">
    <text evidence="1">Glycan biosynthesis; glycogen biosynthesis.</text>
</comment>
<comment type="similarity">
    <text evidence="1">Belongs to the glycosyltransferase 1 family. Bacterial/plant glycogen synthase subfamily.</text>
</comment>
<dbReference type="EC" id="2.4.1.21" evidence="1"/>
<dbReference type="EMBL" id="CP000492">
    <property type="protein sequence ID" value="ABL66365.1"/>
    <property type="molecule type" value="Genomic_DNA"/>
</dbReference>
<dbReference type="RefSeq" id="WP_011746150.1">
    <property type="nucleotide sequence ID" value="NC_008639.1"/>
</dbReference>
<dbReference type="SMR" id="A1BIY8"/>
<dbReference type="STRING" id="290317.Cpha266_2377"/>
<dbReference type="CAZy" id="GT5">
    <property type="family name" value="Glycosyltransferase Family 5"/>
</dbReference>
<dbReference type="KEGG" id="cph:Cpha266_2377"/>
<dbReference type="eggNOG" id="COG0297">
    <property type="taxonomic scope" value="Bacteria"/>
</dbReference>
<dbReference type="HOGENOM" id="CLU_009583_18_0_10"/>
<dbReference type="OrthoDB" id="9808590at2"/>
<dbReference type="UniPathway" id="UPA00164"/>
<dbReference type="Proteomes" id="UP000008701">
    <property type="component" value="Chromosome"/>
</dbReference>
<dbReference type="GO" id="GO:0009011">
    <property type="term" value="F:alpha-1,4-glucan glucosyltransferase (ADP-glucose donor) activity"/>
    <property type="evidence" value="ECO:0007669"/>
    <property type="project" value="UniProtKB-UniRule"/>
</dbReference>
<dbReference type="GO" id="GO:0004373">
    <property type="term" value="F:alpha-1,4-glucan glucosyltransferase (UDP-glucose donor) activity"/>
    <property type="evidence" value="ECO:0007669"/>
    <property type="project" value="InterPro"/>
</dbReference>
<dbReference type="GO" id="GO:0005978">
    <property type="term" value="P:glycogen biosynthetic process"/>
    <property type="evidence" value="ECO:0007669"/>
    <property type="project" value="UniProtKB-UniRule"/>
</dbReference>
<dbReference type="CDD" id="cd03791">
    <property type="entry name" value="GT5_Glycogen_synthase_DULL1-like"/>
    <property type="match status" value="1"/>
</dbReference>
<dbReference type="Gene3D" id="3.40.50.2000">
    <property type="entry name" value="Glycogen Phosphorylase B"/>
    <property type="match status" value="2"/>
</dbReference>
<dbReference type="HAMAP" id="MF_00484">
    <property type="entry name" value="Glycogen_synth"/>
    <property type="match status" value="1"/>
</dbReference>
<dbReference type="InterPro" id="IPR001296">
    <property type="entry name" value="Glyco_trans_1"/>
</dbReference>
<dbReference type="InterPro" id="IPR011835">
    <property type="entry name" value="GS/SS"/>
</dbReference>
<dbReference type="InterPro" id="IPR013534">
    <property type="entry name" value="Starch_synth_cat_dom"/>
</dbReference>
<dbReference type="NCBIfam" id="TIGR02095">
    <property type="entry name" value="glgA"/>
    <property type="match status" value="1"/>
</dbReference>
<dbReference type="NCBIfam" id="NF010698">
    <property type="entry name" value="PRK14098.1"/>
    <property type="match status" value="1"/>
</dbReference>
<dbReference type="PANTHER" id="PTHR45825:SF11">
    <property type="entry name" value="ALPHA AMYLASE DOMAIN-CONTAINING PROTEIN"/>
    <property type="match status" value="1"/>
</dbReference>
<dbReference type="PANTHER" id="PTHR45825">
    <property type="entry name" value="GRANULE-BOUND STARCH SYNTHASE 1, CHLOROPLASTIC/AMYLOPLASTIC"/>
    <property type="match status" value="1"/>
</dbReference>
<dbReference type="Pfam" id="PF08323">
    <property type="entry name" value="Glyco_transf_5"/>
    <property type="match status" value="1"/>
</dbReference>
<dbReference type="Pfam" id="PF00534">
    <property type="entry name" value="Glycos_transf_1"/>
    <property type="match status" value="1"/>
</dbReference>
<dbReference type="SUPFAM" id="SSF53756">
    <property type="entry name" value="UDP-Glycosyltransferase/glycogen phosphorylase"/>
    <property type="match status" value="1"/>
</dbReference>
<keyword id="KW-0320">Glycogen biosynthesis</keyword>
<keyword id="KW-0328">Glycosyltransferase</keyword>
<keyword id="KW-1185">Reference proteome</keyword>
<keyword id="KW-0808">Transferase</keyword>
<protein>
    <recommendedName>
        <fullName evidence="1">Glycogen synthase</fullName>
        <ecNumber evidence="1">2.4.1.21</ecNumber>
    </recommendedName>
    <alternativeName>
        <fullName evidence="1">Starch [bacterial glycogen] synthase</fullName>
    </alternativeName>
</protein>